<gene>
    <name evidence="6" type="primary">habp4.L</name>
</gene>
<sequence>MRLDTMKETPSSPVNTEMQDNFGCAVGNRFHQLLDDESDPLDFLYQSGVELTRRKKKEDAAAKKSANQKSGKKESQKDRKAAVVGGNTDVKMTPQTESGKVSQKDRKTFVVGGNTDVKVTQPGQKHAPKNMEKAPQNENVGSQVKVDRAERRPAFREVRPNIMDRSNEYSIEKPMEILDQDKQMRNYGGRGGMRGRGRGGFPRNTENDNLRGKREFDRHSGSDRAIRPEDKRGGSGPRNWGSIKEAFSEIEAIPVEEQIETTETTEATEEEHAKVPEEKNEGFSQEMSLDEWRSLQDQNRSKTEFNLRKPEAAVPTKAVVIHKSKFKNNLSENEEDYHYCFRKPVNDITAQLDINFGSLTRPSRGRGGGGRGRVRREEAFPHEVINVLADAPNPDDPEDFPALA</sequence>
<protein>
    <recommendedName>
        <fullName evidence="5">Intracellular hyaluronan-binding protein 4.L</fullName>
    </recommendedName>
</protein>
<accession>Q6PB22</accession>
<feature type="chain" id="PRO_0000458234" description="Intracellular hyaluronan-binding protein 4.L">
    <location>
        <begin position="1"/>
        <end position="404"/>
    </location>
</feature>
<feature type="region of interest" description="Disordered" evidence="3">
    <location>
        <begin position="1"/>
        <end position="21"/>
    </location>
</feature>
<feature type="region of interest" description="Disordered" evidence="3">
    <location>
        <begin position="51"/>
        <end position="288"/>
    </location>
</feature>
<feature type="region of interest" description="Disordered" evidence="3">
    <location>
        <begin position="359"/>
        <end position="379"/>
    </location>
</feature>
<feature type="compositionally biased region" description="Polar residues" evidence="3">
    <location>
        <begin position="8"/>
        <end position="19"/>
    </location>
</feature>
<feature type="compositionally biased region" description="Basic and acidic residues" evidence="3">
    <location>
        <begin position="71"/>
        <end position="81"/>
    </location>
</feature>
<feature type="compositionally biased region" description="Basic and acidic residues" evidence="3">
    <location>
        <begin position="145"/>
        <end position="159"/>
    </location>
</feature>
<feature type="compositionally biased region" description="Basic and acidic residues" evidence="3">
    <location>
        <begin position="165"/>
        <end position="184"/>
    </location>
</feature>
<feature type="compositionally biased region" description="Gly residues" evidence="3">
    <location>
        <begin position="188"/>
        <end position="200"/>
    </location>
</feature>
<feature type="compositionally biased region" description="Basic and acidic residues" evidence="3">
    <location>
        <begin position="205"/>
        <end position="233"/>
    </location>
</feature>
<feature type="compositionally biased region" description="Basic and acidic residues" evidence="3">
    <location>
        <begin position="270"/>
        <end position="281"/>
    </location>
</feature>
<keyword id="KW-0963">Cytoplasm</keyword>
<keyword id="KW-0539">Nucleus</keyword>
<keyword id="KW-1185">Reference proteome</keyword>
<keyword id="KW-0810">Translation regulation</keyword>
<reference key="1">
    <citation type="journal article" date="2016" name="Nature">
        <title>Genome evolution in the allotetraploid frog Xenopus laevis.</title>
        <authorList>
            <person name="Session A.M."/>
            <person name="Uno Y."/>
            <person name="Kwon T."/>
            <person name="Chapman J.A."/>
            <person name="Toyoda A."/>
            <person name="Takahashi S."/>
            <person name="Fukui A."/>
            <person name="Hikosaka A."/>
            <person name="Suzuki A."/>
            <person name="Kondo M."/>
            <person name="van Heeringen S.J."/>
            <person name="Quigley I."/>
            <person name="Heinz S."/>
            <person name="Ogino H."/>
            <person name="Ochi H."/>
            <person name="Hellsten U."/>
            <person name="Lyons J.B."/>
            <person name="Simakov O."/>
            <person name="Putnam N."/>
            <person name="Stites J."/>
            <person name="Kuroki Y."/>
            <person name="Tanaka T."/>
            <person name="Michiue T."/>
            <person name="Watanabe M."/>
            <person name="Bogdanovic O."/>
            <person name="Lister R."/>
            <person name="Georgiou G."/>
            <person name="Paranjpe S.S."/>
            <person name="van Kruijsbergen I."/>
            <person name="Shu S."/>
            <person name="Carlson J."/>
            <person name="Kinoshita T."/>
            <person name="Ohta Y."/>
            <person name="Mawaribuchi S."/>
            <person name="Jenkins J."/>
            <person name="Grimwood J."/>
            <person name="Schmutz J."/>
            <person name="Mitros T."/>
            <person name="Mozaffari S.V."/>
            <person name="Suzuki Y."/>
            <person name="Haramoto Y."/>
            <person name="Yamamoto T.S."/>
            <person name="Takagi C."/>
            <person name="Heald R."/>
            <person name="Miller K."/>
            <person name="Haudenschild C."/>
            <person name="Kitzman J."/>
            <person name="Nakayama T."/>
            <person name="Izutsu Y."/>
            <person name="Robert J."/>
            <person name="Fortriede J."/>
            <person name="Burns K."/>
            <person name="Lotay V."/>
            <person name="Karimi K."/>
            <person name="Yasuoka Y."/>
            <person name="Dichmann D.S."/>
            <person name="Flajnik M.F."/>
            <person name="Houston D.W."/>
            <person name="Shendure J."/>
            <person name="DuPasquier L."/>
            <person name="Vize P.D."/>
            <person name="Zorn A.M."/>
            <person name="Ito M."/>
            <person name="Marcotte E.M."/>
            <person name="Wallingford J.B."/>
            <person name="Ito Y."/>
            <person name="Asashima M."/>
            <person name="Ueno N."/>
            <person name="Matsuda Y."/>
            <person name="Veenstra G.J."/>
            <person name="Fujiyama A."/>
            <person name="Harland R.M."/>
            <person name="Taira M."/>
            <person name="Rokhsar D.S."/>
        </authorList>
    </citation>
    <scope>NUCLEOTIDE SEQUENCE [LARGE SCALE GENOMIC DNA]</scope>
    <source>
        <strain>J</strain>
    </source>
</reference>
<reference key="2">
    <citation type="submission" date="2003-10" db="EMBL/GenBank/DDBJ databases">
        <authorList>
            <consortium name="NIH - Xenopus Gene Collection (XGC) project"/>
        </authorList>
    </citation>
    <scope>NUCLEOTIDE SEQUENCE [LARGE SCALE MRNA]</scope>
    <source>
        <tissue>Kidney</tissue>
    </source>
</reference>
<reference key="3">
    <citation type="journal article" date="2023" name="Nature">
        <title>A molecular network of conserved factors keeps ribosomes dormant in the egg.</title>
        <authorList>
            <person name="Leesch F."/>
            <person name="Lorenzo-Orts L."/>
            <person name="Pribitzer C."/>
            <person name="Grishkovskaya I."/>
            <person name="Roehsner J."/>
            <person name="Chugunova A."/>
            <person name="Matzinger M."/>
            <person name="Roitinger E."/>
            <person name="Belacic K."/>
            <person name="Kandolf S."/>
            <person name="Lin T.Y."/>
            <person name="Mechtler K."/>
            <person name="Meinhart A."/>
            <person name="Haselbach D."/>
            <person name="Pauli A."/>
        </authorList>
    </citation>
    <scope>FUNCTION</scope>
    <scope>INTERACTION WITH EEF2</scope>
    <scope>RIBOSOME-BINDING</scope>
</reference>
<name>HAB4L_XENLA</name>
<comment type="function">
    <text evidence="4">Ribosome-binding protein that promotes ribosome hibernation, a process during which ribosomes are stabilized in an inactive state and preserved from proteasomal degradation (PubMed:36653451). Acts via its association with eef2/eEF2 factor at the A-site of the ribosome, promoting ribosome stabilization in an inactive state compatible with storage (PubMed:36653451). Plays a key role in ribosome hibernation in the mature egg by promoting ribosome stabilization (PubMed:36653451). Ribosomes, which are produced in large quantities during oogenesis, are stored and translationally repressed in the egg and early embryo (PubMed:36653451).</text>
</comment>
<comment type="subunit">
    <text evidence="4">Associates with ribosomes; promoting ribosome stabilization (PubMed:36653451). Interacts with eef2/eEF2; promoting ribosome stabilization (PubMed:36653451).</text>
</comment>
<comment type="subcellular location">
    <subcellularLocation>
        <location evidence="1">Nucleus</location>
    </subcellularLocation>
    <subcellularLocation>
        <location evidence="2">Cytoplasm</location>
    </subcellularLocation>
    <subcellularLocation>
        <location evidence="1">Cytoplasm</location>
        <location evidence="1">Stress granule</location>
    </subcellularLocation>
    <subcellularLocation>
        <location evidence="1">Nucleus</location>
        <location evidence="1">Nucleolus</location>
    </subcellularLocation>
    <subcellularLocation>
        <location evidence="1">Nucleus speckle</location>
    </subcellularLocation>
    <subcellularLocation>
        <location evidence="1">Nucleus</location>
        <location evidence="1">Cajal body</location>
    </subcellularLocation>
    <text evidence="2">Predominantly cytoplasmic.</text>
</comment>
<comment type="similarity">
    <text evidence="5">Belongs to the SERBP1-HABP4 family.</text>
</comment>
<proteinExistence type="evidence at protein level"/>
<dbReference type="EMBL" id="CM004466">
    <property type="status" value="NOT_ANNOTATED_CDS"/>
    <property type="molecule type" value="Genomic_DNA"/>
</dbReference>
<dbReference type="EMBL" id="BC059961">
    <property type="protein sequence ID" value="AAH59961.1"/>
    <property type="molecule type" value="mRNA"/>
</dbReference>
<dbReference type="RefSeq" id="NP_001083218.1">
    <property type="nucleotide sequence ID" value="NM_001089749.1"/>
</dbReference>
<dbReference type="IntAct" id="Q6PB22">
    <property type="interactions" value="1"/>
</dbReference>
<dbReference type="DNASU" id="398807"/>
<dbReference type="GeneID" id="398807"/>
<dbReference type="KEGG" id="xla:398807"/>
<dbReference type="AGR" id="Xenbase:XB-GENE-17345804"/>
<dbReference type="CTD" id="398807"/>
<dbReference type="Xenbase" id="XB-GENE-17345804">
    <property type="gene designation" value="habp4.L"/>
</dbReference>
<dbReference type="OrthoDB" id="6022699at2759"/>
<dbReference type="Proteomes" id="UP000186698">
    <property type="component" value="Chromosome 1L"/>
</dbReference>
<dbReference type="Proteomes" id="UP000694892">
    <property type="component" value="Chromosome 1L"/>
</dbReference>
<dbReference type="Bgee" id="398807">
    <property type="expression patterns" value="Expressed in blastula and 19 other cell types or tissues"/>
</dbReference>
<dbReference type="GO" id="GO:0015030">
    <property type="term" value="C:Cajal body"/>
    <property type="evidence" value="ECO:0007669"/>
    <property type="project" value="UniProtKB-SubCell"/>
</dbReference>
<dbReference type="GO" id="GO:0005737">
    <property type="term" value="C:cytoplasm"/>
    <property type="evidence" value="ECO:0000318"/>
    <property type="project" value="GO_Central"/>
</dbReference>
<dbReference type="GO" id="GO:0010494">
    <property type="term" value="C:cytoplasmic stress granule"/>
    <property type="evidence" value="ECO:0007669"/>
    <property type="project" value="UniProtKB-SubCell"/>
</dbReference>
<dbReference type="GO" id="GO:0016607">
    <property type="term" value="C:nuclear speck"/>
    <property type="evidence" value="ECO:0007669"/>
    <property type="project" value="UniProtKB-SubCell"/>
</dbReference>
<dbReference type="GO" id="GO:0005730">
    <property type="term" value="C:nucleolus"/>
    <property type="evidence" value="ECO:0007669"/>
    <property type="project" value="UniProtKB-SubCell"/>
</dbReference>
<dbReference type="GO" id="GO:0005634">
    <property type="term" value="C:nucleus"/>
    <property type="evidence" value="ECO:0000318"/>
    <property type="project" value="GO_Central"/>
</dbReference>
<dbReference type="GO" id="GO:0043022">
    <property type="term" value="F:ribosome binding"/>
    <property type="evidence" value="ECO:0000314"/>
    <property type="project" value="UniProtKB"/>
</dbReference>
<dbReference type="GO" id="GO:0003723">
    <property type="term" value="F:RNA binding"/>
    <property type="evidence" value="ECO:0000318"/>
    <property type="project" value="GO_Central"/>
</dbReference>
<dbReference type="GO" id="GO:0061770">
    <property type="term" value="F:translation elongation factor binding"/>
    <property type="evidence" value="ECO:0000353"/>
    <property type="project" value="UniProtKB"/>
</dbReference>
<dbReference type="GO" id="GO:0033120">
    <property type="term" value="P:positive regulation of RNA splicing"/>
    <property type="evidence" value="ECO:0000318"/>
    <property type="project" value="GO_Central"/>
</dbReference>
<dbReference type="GO" id="GO:0045948">
    <property type="term" value="P:positive regulation of translational initiation"/>
    <property type="evidence" value="ECO:0000318"/>
    <property type="project" value="GO_Central"/>
</dbReference>
<dbReference type="GO" id="GO:0141014">
    <property type="term" value="P:ribosome hibernation"/>
    <property type="evidence" value="ECO:0000314"/>
    <property type="project" value="UniProtKB"/>
</dbReference>
<dbReference type="Gene3D" id="6.10.140.1040">
    <property type="match status" value="1"/>
</dbReference>
<dbReference type="InterPro" id="IPR039764">
    <property type="entry name" value="HABP4/SERBP1-like"/>
</dbReference>
<dbReference type="InterPro" id="IPR006861">
    <property type="entry name" value="HABP4_PAIRBP1-bd"/>
</dbReference>
<dbReference type="InterPro" id="IPR032381">
    <property type="entry name" value="IHABP4_N"/>
</dbReference>
<dbReference type="PANTHER" id="PTHR12299">
    <property type="entry name" value="HYALURONIC ACID-BINDING PROTEIN 4"/>
    <property type="match status" value="1"/>
</dbReference>
<dbReference type="PANTHER" id="PTHR12299:SF30">
    <property type="entry name" value="INTRACELLULAR HYALURONAN-BINDING PROTEIN 4"/>
    <property type="match status" value="1"/>
</dbReference>
<dbReference type="Pfam" id="PF04774">
    <property type="entry name" value="HABP4_PAI-RBP1"/>
    <property type="match status" value="1"/>
</dbReference>
<dbReference type="Pfam" id="PF16174">
    <property type="entry name" value="IHABP4_N"/>
    <property type="match status" value="1"/>
</dbReference>
<dbReference type="SMART" id="SM01233">
    <property type="entry name" value="HABP4_PAI-RBP1"/>
    <property type="match status" value="1"/>
</dbReference>
<organism>
    <name type="scientific">Xenopus laevis</name>
    <name type="common">African clawed frog</name>
    <dbReference type="NCBI Taxonomy" id="8355"/>
    <lineage>
        <taxon>Eukaryota</taxon>
        <taxon>Metazoa</taxon>
        <taxon>Chordata</taxon>
        <taxon>Craniata</taxon>
        <taxon>Vertebrata</taxon>
        <taxon>Euteleostomi</taxon>
        <taxon>Amphibia</taxon>
        <taxon>Batrachia</taxon>
        <taxon>Anura</taxon>
        <taxon>Pipoidea</taxon>
        <taxon>Pipidae</taxon>
        <taxon>Xenopodinae</taxon>
        <taxon>Xenopus</taxon>
        <taxon>Xenopus</taxon>
    </lineage>
</organism>
<evidence type="ECO:0000250" key="1">
    <source>
        <dbReference type="UniProtKB" id="Q5JVS0"/>
    </source>
</evidence>
<evidence type="ECO:0000250" key="2">
    <source>
        <dbReference type="UniProtKB" id="Q9I9R0"/>
    </source>
</evidence>
<evidence type="ECO:0000256" key="3">
    <source>
        <dbReference type="SAM" id="MobiDB-lite"/>
    </source>
</evidence>
<evidence type="ECO:0000269" key="4">
    <source>
    </source>
</evidence>
<evidence type="ECO:0000305" key="5"/>
<evidence type="ECO:0000312" key="6">
    <source>
        <dbReference type="Xenbase" id="XB-GENE-17345804"/>
    </source>
</evidence>